<evidence type="ECO:0000255" key="1">
    <source>
        <dbReference type="HAMAP-Rule" id="MF_01031"/>
    </source>
</evidence>
<reference key="1">
    <citation type="journal article" date="2004" name="Nat. Biotechnol.">
        <title>Complete genome sequence of the metabolically versatile photosynthetic bacterium Rhodopseudomonas palustris.</title>
        <authorList>
            <person name="Larimer F.W."/>
            <person name="Chain P."/>
            <person name="Hauser L."/>
            <person name="Lamerdin J.E."/>
            <person name="Malfatti S."/>
            <person name="Do L."/>
            <person name="Land M.L."/>
            <person name="Pelletier D.A."/>
            <person name="Beatty J.T."/>
            <person name="Lang A.S."/>
            <person name="Tabita F.R."/>
            <person name="Gibson J.L."/>
            <person name="Hanson T.E."/>
            <person name="Bobst C."/>
            <person name="Torres y Torres J.L."/>
            <person name="Peres C."/>
            <person name="Harrison F.H."/>
            <person name="Gibson J."/>
            <person name="Harwood C.S."/>
        </authorList>
    </citation>
    <scope>NUCLEOTIDE SEQUENCE [LARGE SCALE GENOMIC DNA]</scope>
    <source>
        <strain>ATCC BAA-98 / CGA009</strain>
    </source>
</reference>
<sequence length="201" mass="22324">MDKFTTLEGVAAPLKIINVDTDMIIPKQYLKTIKRTGLGKGLFSEQRYKDDGSENPDFILNKPAYRGAKILVAGDNFGCGSSREHAPWALLDFGIRCVISTSFGDIFYNNCFKNGVLPIRVSQADLDKLFDDAERGSNATMTIDLQAQEIRGPDGGAIKFEIDPFRKHCLINGLDDIGLTLEKKPSIDAYETKLKTERAWA</sequence>
<dbReference type="EC" id="4.2.1.33" evidence="1"/>
<dbReference type="EMBL" id="BX572593">
    <property type="protein sequence ID" value="CAE25679.1"/>
    <property type="molecule type" value="Genomic_DNA"/>
</dbReference>
<dbReference type="RefSeq" id="WP_011155803.1">
    <property type="nucleotide sequence ID" value="NZ_CP116810.1"/>
</dbReference>
<dbReference type="SMR" id="Q6ND74"/>
<dbReference type="STRING" id="258594.RPA0235"/>
<dbReference type="GeneID" id="66891241"/>
<dbReference type="eggNOG" id="COG0066">
    <property type="taxonomic scope" value="Bacteria"/>
</dbReference>
<dbReference type="HOGENOM" id="CLU_081378_0_3_5"/>
<dbReference type="PhylomeDB" id="Q6ND74"/>
<dbReference type="UniPathway" id="UPA00048">
    <property type="reaction ID" value="UER00071"/>
</dbReference>
<dbReference type="GO" id="GO:0009316">
    <property type="term" value="C:3-isopropylmalate dehydratase complex"/>
    <property type="evidence" value="ECO:0007669"/>
    <property type="project" value="InterPro"/>
</dbReference>
<dbReference type="GO" id="GO:0003861">
    <property type="term" value="F:3-isopropylmalate dehydratase activity"/>
    <property type="evidence" value="ECO:0007669"/>
    <property type="project" value="UniProtKB-UniRule"/>
</dbReference>
<dbReference type="GO" id="GO:0009098">
    <property type="term" value="P:L-leucine biosynthetic process"/>
    <property type="evidence" value="ECO:0007669"/>
    <property type="project" value="UniProtKB-UniRule"/>
</dbReference>
<dbReference type="CDD" id="cd01577">
    <property type="entry name" value="IPMI_Swivel"/>
    <property type="match status" value="1"/>
</dbReference>
<dbReference type="FunFam" id="3.20.19.10:FF:000003">
    <property type="entry name" value="3-isopropylmalate dehydratase small subunit"/>
    <property type="match status" value="1"/>
</dbReference>
<dbReference type="Gene3D" id="3.20.19.10">
    <property type="entry name" value="Aconitase, domain 4"/>
    <property type="match status" value="1"/>
</dbReference>
<dbReference type="HAMAP" id="MF_01031">
    <property type="entry name" value="LeuD_type1"/>
    <property type="match status" value="1"/>
</dbReference>
<dbReference type="InterPro" id="IPR004431">
    <property type="entry name" value="3-IsopropMal_deHydase_ssu"/>
</dbReference>
<dbReference type="InterPro" id="IPR015928">
    <property type="entry name" value="Aconitase/3IPM_dehydase_swvl"/>
</dbReference>
<dbReference type="InterPro" id="IPR000573">
    <property type="entry name" value="AconitaseA/IPMdHydase_ssu_swvl"/>
</dbReference>
<dbReference type="InterPro" id="IPR033940">
    <property type="entry name" value="IPMI_Swivel"/>
</dbReference>
<dbReference type="InterPro" id="IPR050075">
    <property type="entry name" value="LeuD"/>
</dbReference>
<dbReference type="NCBIfam" id="TIGR00171">
    <property type="entry name" value="leuD"/>
    <property type="match status" value="1"/>
</dbReference>
<dbReference type="NCBIfam" id="NF002458">
    <property type="entry name" value="PRK01641.1"/>
    <property type="match status" value="1"/>
</dbReference>
<dbReference type="PANTHER" id="PTHR43345:SF5">
    <property type="entry name" value="3-ISOPROPYLMALATE DEHYDRATASE SMALL SUBUNIT"/>
    <property type="match status" value="1"/>
</dbReference>
<dbReference type="PANTHER" id="PTHR43345">
    <property type="entry name" value="3-ISOPROPYLMALATE DEHYDRATASE SMALL SUBUNIT 2-RELATED-RELATED"/>
    <property type="match status" value="1"/>
</dbReference>
<dbReference type="Pfam" id="PF00694">
    <property type="entry name" value="Aconitase_C"/>
    <property type="match status" value="1"/>
</dbReference>
<dbReference type="SUPFAM" id="SSF52016">
    <property type="entry name" value="LeuD/IlvD-like"/>
    <property type="match status" value="1"/>
</dbReference>
<keyword id="KW-0028">Amino-acid biosynthesis</keyword>
<keyword id="KW-0100">Branched-chain amino acid biosynthesis</keyword>
<keyword id="KW-0432">Leucine biosynthesis</keyword>
<keyword id="KW-0456">Lyase</keyword>
<proteinExistence type="inferred from homology"/>
<gene>
    <name evidence="1" type="primary">leuD</name>
    <name type="ordered locus">RPA0235</name>
</gene>
<organism>
    <name type="scientific">Rhodopseudomonas palustris (strain ATCC BAA-98 / CGA009)</name>
    <dbReference type="NCBI Taxonomy" id="258594"/>
    <lineage>
        <taxon>Bacteria</taxon>
        <taxon>Pseudomonadati</taxon>
        <taxon>Pseudomonadota</taxon>
        <taxon>Alphaproteobacteria</taxon>
        <taxon>Hyphomicrobiales</taxon>
        <taxon>Nitrobacteraceae</taxon>
        <taxon>Rhodopseudomonas</taxon>
    </lineage>
</organism>
<name>LEUD_RHOPA</name>
<protein>
    <recommendedName>
        <fullName evidence="1">3-isopropylmalate dehydratase small subunit</fullName>
        <ecNumber evidence="1">4.2.1.33</ecNumber>
    </recommendedName>
    <alternativeName>
        <fullName evidence="1">Alpha-IPM isomerase</fullName>
        <shortName evidence="1">IPMI</shortName>
    </alternativeName>
    <alternativeName>
        <fullName evidence="1">Isopropylmalate isomerase</fullName>
    </alternativeName>
</protein>
<feature type="chain" id="PRO_0000141870" description="3-isopropylmalate dehydratase small subunit">
    <location>
        <begin position="1"/>
        <end position="201"/>
    </location>
</feature>
<comment type="function">
    <text evidence="1">Catalyzes the isomerization between 2-isopropylmalate and 3-isopropylmalate, via the formation of 2-isopropylmaleate.</text>
</comment>
<comment type="catalytic activity">
    <reaction evidence="1">
        <text>(2R,3S)-3-isopropylmalate = (2S)-2-isopropylmalate</text>
        <dbReference type="Rhea" id="RHEA:32287"/>
        <dbReference type="ChEBI" id="CHEBI:1178"/>
        <dbReference type="ChEBI" id="CHEBI:35121"/>
        <dbReference type="EC" id="4.2.1.33"/>
    </reaction>
</comment>
<comment type="pathway">
    <text evidence="1">Amino-acid biosynthesis; L-leucine biosynthesis; L-leucine from 3-methyl-2-oxobutanoate: step 2/4.</text>
</comment>
<comment type="subunit">
    <text evidence="1">Heterodimer of LeuC and LeuD.</text>
</comment>
<comment type="similarity">
    <text evidence="1">Belongs to the LeuD family. LeuD type 1 subfamily.</text>
</comment>
<accession>Q6ND74</accession>